<protein>
    <recommendedName>
        <fullName evidence="1">Large ribosomal subunit protein bL32</fullName>
    </recommendedName>
    <alternativeName>
        <fullName evidence="2">50S ribosomal protein L32</fullName>
    </alternativeName>
</protein>
<reference key="1">
    <citation type="journal article" date="2008" name="BMC Microbiol.">
        <title>Complete genome sequence of Treponema pallidum ssp. pallidum strain SS14 determined with oligonucleotide arrays.</title>
        <authorList>
            <person name="Matejkova P."/>
            <person name="Strouhal M."/>
            <person name="Smajs D."/>
            <person name="Norris S.J."/>
            <person name="Palzkill T."/>
            <person name="Petrosino J.F."/>
            <person name="Sodergren E."/>
            <person name="Norton J.E."/>
            <person name="Singh J."/>
            <person name="Richmond T.A."/>
            <person name="Molla M.N."/>
            <person name="Albert T.J."/>
            <person name="Weinstock G.M."/>
        </authorList>
    </citation>
    <scope>NUCLEOTIDE SEQUENCE [LARGE SCALE GENOMIC DNA]</scope>
    <source>
        <strain>SS14</strain>
    </source>
</reference>
<keyword id="KW-0687">Ribonucleoprotein</keyword>
<keyword id="KW-0689">Ribosomal protein</keyword>
<evidence type="ECO:0000255" key="1">
    <source>
        <dbReference type="HAMAP-Rule" id="MF_00340"/>
    </source>
</evidence>
<evidence type="ECO:0000305" key="2"/>
<comment type="similarity">
    <text evidence="1">Belongs to the bacterial ribosomal protein bL32 family.</text>
</comment>
<gene>
    <name evidence="1" type="primary">rpmF</name>
    <name type="ordered locus">TPASS_0807</name>
</gene>
<dbReference type="EMBL" id="CP000805">
    <property type="protein sequence ID" value="ACD71225.1"/>
    <property type="molecule type" value="Genomic_DNA"/>
</dbReference>
<dbReference type="RefSeq" id="WP_010882252.1">
    <property type="nucleotide sequence ID" value="NC_021508.1"/>
</dbReference>
<dbReference type="SMR" id="B2S446"/>
<dbReference type="GeneID" id="93876568"/>
<dbReference type="KEGG" id="tpp:TPASS_0807"/>
<dbReference type="PATRIC" id="fig|455434.6.peg.795"/>
<dbReference type="Proteomes" id="UP000001202">
    <property type="component" value="Chromosome"/>
</dbReference>
<dbReference type="GO" id="GO:0015934">
    <property type="term" value="C:large ribosomal subunit"/>
    <property type="evidence" value="ECO:0007669"/>
    <property type="project" value="InterPro"/>
</dbReference>
<dbReference type="GO" id="GO:0003735">
    <property type="term" value="F:structural constituent of ribosome"/>
    <property type="evidence" value="ECO:0007669"/>
    <property type="project" value="InterPro"/>
</dbReference>
<dbReference type="GO" id="GO:0006412">
    <property type="term" value="P:translation"/>
    <property type="evidence" value="ECO:0007669"/>
    <property type="project" value="UniProtKB-UniRule"/>
</dbReference>
<dbReference type="HAMAP" id="MF_00340">
    <property type="entry name" value="Ribosomal_bL32"/>
    <property type="match status" value="1"/>
</dbReference>
<dbReference type="InterPro" id="IPR002677">
    <property type="entry name" value="Ribosomal_bL32"/>
</dbReference>
<dbReference type="InterPro" id="IPR044957">
    <property type="entry name" value="Ribosomal_bL32_bact"/>
</dbReference>
<dbReference type="InterPro" id="IPR011332">
    <property type="entry name" value="Ribosomal_zn-bd"/>
</dbReference>
<dbReference type="NCBIfam" id="TIGR01031">
    <property type="entry name" value="rpmF_bact"/>
    <property type="match status" value="1"/>
</dbReference>
<dbReference type="PANTHER" id="PTHR35534">
    <property type="entry name" value="50S RIBOSOMAL PROTEIN L32"/>
    <property type="match status" value="1"/>
</dbReference>
<dbReference type="PANTHER" id="PTHR35534:SF1">
    <property type="entry name" value="LARGE RIBOSOMAL SUBUNIT PROTEIN BL32"/>
    <property type="match status" value="1"/>
</dbReference>
<dbReference type="Pfam" id="PF01783">
    <property type="entry name" value="Ribosomal_L32p"/>
    <property type="match status" value="1"/>
</dbReference>
<dbReference type="SUPFAM" id="SSF57829">
    <property type="entry name" value="Zn-binding ribosomal proteins"/>
    <property type="match status" value="1"/>
</dbReference>
<sequence>MAVPRANTSKARTRRRRAVNMRLEAPHLVECGNCGNFVQSHRVCGRCGFYRGRQVINPDDLC</sequence>
<proteinExistence type="inferred from homology"/>
<organism>
    <name type="scientific">Treponema pallidum subsp. pallidum (strain SS14)</name>
    <dbReference type="NCBI Taxonomy" id="455434"/>
    <lineage>
        <taxon>Bacteria</taxon>
        <taxon>Pseudomonadati</taxon>
        <taxon>Spirochaetota</taxon>
        <taxon>Spirochaetia</taxon>
        <taxon>Spirochaetales</taxon>
        <taxon>Treponemataceae</taxon>
        <taxon>Treponema</taxon>
    </lineage>
</organism>
<name>RL32_TREPS</name>
<feature type="chain" id="PRO_1000120186" description="Large ribosomal subunit protein bL32">
    <location>
        <begin position="1"/>
        <end position="62"/>
    </location>
</feature>
<accession>B2S446</accession>